<dbReference type="EMBL" id="BC102437">
    <property type="protein sequence ID" value="AAI02438.1"/>
    <property type="molecule type" value="mRNA"/>
</dbReference>
<dbReference type="RefSeq" id="NP_001124230.1">
    <property type="nucleotide sequence ID" value="NM_001130758.1"/>
</dbReference>
<dbReference type="RefSeq" id="XP_005209705.1">
    <property type="nucleotide sequence ID" value="XM_005209648.5"/>
</dbReference>
<dbReference type="RefSeq" id="XP_010805828.1">
    <property type="nucleotide sequence ID" value="XM_010807526.4"/>
</dbReference>
<dbReference type="RefSeq" id="XP_015327815.1">
    <property type="nucleotide sequence ID" value="XM_015472329.1"/>
</dbReference>
<dbReference type="SMR" id="Q3T0E0"/>
<dbReference type="FunCoup" id="Q3T0E0">
    <property type="interactions" value="1935"/>
</dbReference>
<dbReference type="STRING" id="9913.ENSBTAP00000010982"/>
<dbReference type="PaxDb" id="9913-ENSBTAP00000010982"/>
<dbReference type="PeptideAtlas" id="Q3T0E0"/>
<dbReference type="Ensembl" id="ENSBTAT00000010982.5">
    <property type="protein sequence ID" value="ENSBTAP00000010982.4"/>
    <property type="gene ID" value="ENSBTAG00000008340.5"/>
</dbReference>
<dbReference type="GeneID" id="613998"/>
<dbReference type="KEGG" id="bta:613998"/>
<dbReference type="CTD" id="475"/>
<dbReference type="VEuPathDB" id="HostDB:ENSBTAG00000008340"/>
<dbReference type="VGNC" id="VGNC:26273">
    <property type="gene designation" value="ATOX1"/>
</dbReference>
<dbReference type="eggNOG" id="KOG1603">
    <property type="taxonomic scope" value="Eukaryota"/>
</dbReference>
<dbReference type="GeneTree" id="ENSGT00940000163780"/>
<dbReference type="HOGENOM" id="CLU_134973_3_1_1"/>
<dbReference type="InParanoid" id="Q3T0E0"/>
<dbReference type="OMA" id="MTHTYKF"/>
<dbReference type="OrthoDB" id="689350at2759"/>
<dbReference type="TreeFam" id="TF352589"/>
<dbReference type="Proteomes" id="UP000009136">
    <property type="component" value="Chromosome 7"/>
</dbReference>
<dbReference type="Bgee" id="ENSBTAG00000008340">
    <property type="expression patterns" value="Expressed in caput epididymis and 107 other cell types or tissues"/>
</dbReference>
<dbReference type="GO" id="GO:0005829">
    <property type="term" value="C:cytosol"/>
    <property type="evidence" value="ECO:0000318"/>
    <property type="project" value="GO_Central"/>
</dbReference>
<dbReference type="GO" id="GO:0016531">
    <property type="term" value="F:copper chaperone activity"/>
    <property type="evidence" value="ECO:0000318"/>
    <property type="project" value="GO_Central"/>
</dbReference>
<dbReference type="GO" id="GO:0046872">
    <property type="term" value="F:metal ion binding"/>
    <property type="evidence" value="ECO:0007669"/>
    <property type="project" value="UniProtKB-KW"/>
</dbReference>
<dbReference type="GO" id="GO:0006825">
    <property type="term" value="P:copper ion transport"/>
    <property type="evidence" value="ECO:0000318"/>
    <property type="project" value="GO_Central"/>
</dbReference>
<dbReference type="CDD" id="cd00371">
    <property type="entry name" value="HMA"/>
    <property type="match status" value="1"/>
</dbReference>
<dbReference type="FunFam" id="3.30.70.100:FF:000008">
    <property type="entry name" value="Copper transport protein ATOX1"/>
    <property type="match status" value="1"/>
</dbReference>
<dbReference type="Gene3D" id="3.30.70.100">
    <property type="match status" value="1"/>
</dbReference>
<dbReference type="InterPro" id="IPR051881">
    <property type="entry name" value="Copper_transport_ATOX1-like"/>
</dbReference>
<dbReference type="InterPro" id="IPR017969">
    <property type="entry name" value="Heavy-metal-associated_CS"/>
</dbReference>
<dbReference type="InterPro" id="IPR006121">
    <property type="entry name" value="HMA_dom"/>
</dbReference>
<dbReference type="InterPro" id="IPR036163">
    <property type="entry name" value="HMA_dom_sf"/>
</dbReference>
<dbReference type="PANTHER" id="PTHR46365">
    <property type="entry name" value="COPPER TRANSPORT PROTEIN ATOX1"/>
    <property type="match status" value="1"/>
</dbReference>
<dbReference type="PANTHER" id="PTHR46365:SF1">
    <property type="entry name" value="COPPER TRANSPORT PROTEIN ATOX1"/>
    <property type="match status" value="1"/>
</dbReference>
<dbReference type="Pfam" id="PF00403">
    <property type="entry name" value="HMA"/>
    <property type="match status" value="1"/>
</dbReference>
<dbReference type="SUPFAM" id="SSF55008">
    <property type="entry name" value="HMA, heavy metal-associated domain"/>
    <property type="match status" value="1"/>
</dbReference>
<dbReference type="PROSITE" id="PS01047">
    <property type="entry name" value="HMA_1"/>
    <property type="match status" value="1"/>
</dbReference>
<dbReference type="PROSITE" id="PS50846">
    <property type="entry name" value="HMA_2"/>
    <property type="match status" value="1"/>
</dbReference>
<proteinExistence type="inferred from homology"/>
<organism>
    <name type="scientific">Bos taurus</name>
    <name type="common">Bovine</name>
    <dbReference type="NCBI Taxonomy" id="9913"/>
    <lineage>
        <taxon>Eukaryota</taxon>
        <taxon>Metazoa</taxon>
        <taxon>Chordata</taxon>
        <taxon>Craniata</taxon>
        <taxon>Vertebrata</taxon>
        <taxon>Euteleostomi</taxon>
        <taxon>Mammalia</taxon>
        <taxon>Eutheria</taxon>
        <taxon>Laurasiatheria</taxon>
        <taxon>Artiodactyla</taxon>
        <taxon>Ruminantia</taxon>
        <taxon>Pecora</taxon>
        <taxon>Bovidae</taxon>
        <taxon>Bovinae</taxon>
        <taxon>Bos</taxon>
    </lineage>
</organism>
<name>ATOX1_BOVIN</name>
<accession>Q3T0E0</accession>
<comment type="function">
    <text evidence="1">Binds and deliver cytosolic copper to the copper ATPase proteins. May be important in cellular antioxidant defense (By similarity).</text>
</comment>
<comment type="subunit">
    <text evidence="2">Homodimer. Interacts with ATP7B. Interacts with ATP7A. Interacts (via dimer form) with SLC31A1 (via C-terminal domain); this interaction improves ATOX1 stability and controls intracellular Cu(I) levels.</text>
</comment>
<comment type="domain">
    <text evidence="2">The heavy-metal-associated domain (HMA) coordinates a Cu(+) ion via the cysteine residues within the CXXC motif. The transfer of Cu(+) ion from ATOX1 to ATP7A involves the formation of a three-coordinate Cu(+)-bridged heterodimer where the metal is shared between the two metal binding sites of ATOX1 and ATP7A. The Cu(+) ion appears to switch between two coordination modes, forming two links with one protein and one with the other. Cisplatin, a chemotherapeutic drug, can bind the CXXC motif and hinder the release of Cu(+) ion.</text>
</comment>
<comment type="similarity">
    <text evidence="5">Belongs to the ATX1 family.</text>
</comment>
<feature type="chain" id="PRO_0000331118" description="Copper transport protein ATOX1">
    <location>
        <begin position="1"/>
        <end position="68"/>
    </location>
</feature>
<feature type="domain" description="HMA" evidence="4">
    <location>
        <begin position="1"/>
        <end position="63"/>
    </location>
</feature>
<feature type="binding site" evidence="2 4">
    <location>
        <position position="12"/>
    </location>
    <ligand>
        <name>Cu cation</name>
        <dbReference type="ChEBI" id="CHEBI:23378"/>
    </ligand>
</feature>
<feature type="binding site" evidence="2 4">
    <location>
        <position position="15"/>
    </location>
    <ligand>
        <name>Cu cation</name>
        <dbReference type="ChEBI" id="CHEBI:23378"/>
    </ligand>
</feature>
<feature type="modified residue" description="Phosphoserine" evidence="2">
    <location>
        <position position="47"/>
    </location>
</feature>
<feature type="modified residue" description="N6-acetyllysine" evidence="3">
    <location>
        <position position="60"/>
    </location>
</feature>
<sequence>MPKHEFSVDMTCEGCSNAVTRVLNKLGGVQFDIDLPNKKVCINSEHSVDTLLETLGKTGKAVSYLGPK</sequence>
<keyword id="KW-0007">Acetylation</keyword>
<keyword id="KW-0143">Chaperone</keyword>
<keyword id="KW-0186">Copper</keyword>
<keyword id="KW-0187">Copper transport</keyword>
<keyword id="KW-0406">Ion transport</keyword>
<keyword id="KW-0479">Metal-binding</keyword>
<keyword id="KW-0597">Phosphoprotein</keyword>
<keyword id="KW-1185">Reference proteome</keyword>
<keyword id="KW-0813">Transport</keyword>
<reference key="1">
    <citation type="submission" date="2005-08" db="EMBL/GenBank/DDBJ databases">
        <authorList>
            <consortium name="NIH - Mammalian Gene Collection (MGC) project"/>
        </authorList>
    </citation>
    <scope>NUCLEOTIDE SEQUENCE [LARGE SCALE MRNA]</scope>
    <source>
        <strain>Crossbred X Angus</strain>
        <tissue>Ileum</tissue>
    </source>
</reference>
<evidence type="ECO:0000250" key="1"/>
<evidence type="ECO:0000250" key="2">
    <source>
        <dbReference type="UniProtKB" id="O00244"/>
    </source>
</evidence>
<evidence type="ECO:0000250" key="3">
    <source>
        <dbReference type="UniProtKB" id="O08997"/>
    </source>
</evidence>
<evidence type="ECO:0000255" key="4">
    <source>
        <dbReference type="PROSITE-ProRule" id="PRU00280"/>
    </source>
</evidence>
<evidence type="ECO:0000305" key="5"/>
<protein>
    <recommendedName>
        <fullName evidence="2">Copper transport protein ATOX1</fullName>
    </recommendedName>
    <alternativeName>
        <fullName>Metal transport protein ATX1</fullName>
    </alternativeName>
</protein>
<gene>
    <name evidence="2" type="primary">ATOX1</name>
</gene>